<dbReference type="EC" id="2.5.1.145" evidence="1"/>
<dbReference type="EMBL" id="CP000362">
    <property type="protein sequence ID" value="ABG32984.1"/>
    <property type="molecule type" value="Genomic_DNA"/>
</dbReference>
<dbReference type="RefSeq" id="WP_011569597.1">
    <property type="nucleotide sequence ID" value="NC_008209.1"/>
</dbReference>
<dbReference type="SMR" id="Q162V9"/>
<dbReference type="STRING" id="375451.RD1_3501"/>
<dbReference type="KEGG" id="rde:RD1_3501"/>
<dbReference type="eggNOG" id="COG0682">
    <property type="taxonomic scope" value="Bacteria"/>
</dbReference>
<dbReference type="HOGENOM" id="CLU_013386_1_0_5"/>
<dbReference type="OrthoDB" id="871140at2"/>
<dbReference type="UniPathway" id="UPA00664"/>
<dbReference type="Proteomes" id="UP000007029">
    <property type="component" value="Chromosome"/>
</dbReference>
<dbReference type="GO" id="GO:0005886">
    <property type="term" value="C:plasma membrane"/>
    <property type="evidence" value="ECO:0007669"/>
    <property type="project" value="UniProtKB-SubCell"/>
</dbReference>
<dbReference type="GO" id="GO:0008961">
    <property type="term" value="F:phosphatidylglycerol-prolipoprotein diacylglyceryl transferase activity"/>
    <property type="evidence" value="ECO:0007669"/>
    <property type="project" value="UniProtKB-UniRule"/>
</dbReference>
<dbReference type="GO" id="GO:0042158">
    <property type="term" value="P:lipoprotein biosynthetic process"/>
    <property type="evidence" value="ECO:0007669"/>
    <property type="project" value="UniProtKB-UniRule"/>
</dbReference>
<dbReference type="HAMAP" id="MF_01147">
    <property type="entry name" value="Lgt"/>
    <property type="match status" value="1"/>
</dbReference>
<dbReference type="InterPro" id="IPR001640">
    <property type="entry name" value="Lgt"/>
</dbReference>
<dbReference type="NCBIfam" id="TIGR00544">
    <property type="entry name" value="lgt"/>
    <property type="match status" value="1"/>
</dbReference>
<dbReference type="PANTHER" id="PTHR30589:SF0">
    <property type="entry name" value="PHOSPHATIDYLGLYCEROL--PROLIPOPROTEIN DIACYLGLYCERYL TRANSFERASE"/>
    <property type="match status" value="1"/>
</dbReference>
<dbReference type="PANTHER" id="PTHR30589">
    <property type="entry name" value="PROLIPOPROTEIN DIACYLGLYCERYL TRANSFERASE"/>
    <property type="match status" value="1"/>
</dbReference>
<dbReference type="Pfam" id="PF01790">
    <property type="entry name" value="LGT"/>
    <property type="match status" value="1"/>
</dbReference>
<dbReference type="PROSITE" id="PS01311">
    <property type="entry name" value="LGT"/>
    <property type="match status" value="1"/>
</dbReference>
<feature type="chain" id="PRO_1000053495" description="Phosphatidylglycerol--prolipoprotein diacylglyceryl transferase">
    <location>
        <begin position="1"/>
        <end position="294"/>
    </location>
</feature>
<feature type="transmembrane region" description="Helical" evidence="1">
    <location>
        <begin position="19"/>
        <end position="39"/>
    </location>
</feature>
<feature type="transmembrane region" description="Helical" evidence="1">
    <location>
        <begin position="69"/>
        <end position="89"/>
    </location>
</feature>
<feature type="transmembrane region" description="Helical" evidence="1">
    <location>
        <begin position="101"/>
        <end position="121"/>
    </location>
</feature>
<feature type="transmembrane region" description="Helical" evidence="1">
    <location>
        <begin position="139"/>
        <end position="159"/>
    </location>
</feature>
<feature type="transmembrane region" description="Helical" evidence="1">
    <location>
        <begin position="195"/>
        <end position="215"/>
    </location>
</feature>
<feature type="transmembrane region" description="Helical" evidence="1">
    <location>
        <begin position="224"/>
        <end position="244"/>
    </location>
</feature>
<feature type="transmembrane region" description="Helical" evidence="1">
    <location>
        <begin position="267"/>
        <end position="287"/>
    </location>
</feature>
<feature type="binding site" evidence="1">
    <location>
        <position position="152"/>
    </location>
    <ligand>
        <name>a 1,2-diacyl-sn-glycero-3-phospho-(1'-sn-glycerol)</name>
        <dbReference type="ChEBI" id="CHEBI:64716"/>
    </ligand>
</feature>
<gene>
    <name evidence="1" type="primary">lgt</name>
    <name type="ordered locus">RD1_3501</name>
</gene>
<comment type="function">
    <text evidence="1">Catalyzes the transfer of the diacylglyceryl group from phosphatidylglycerol to the sulfhydryl group of the N-terminal cysteine of a prolipoprotein, the first step in the formation of mature lipoproteins.</text>
</comment>
<comment type="catalytic activity">
    <reaction evidence="1">
        <text>L-cysteinyl-[prolipoprotein] + a 1,2-diacyl-sn-glycero-3-phospho-(1'-sn-glycerol) = an S-1,2-diacyl-sn-glyceryl-L-cysteinyl-[prolipoprotein] + sn-glycerol 1-phosphate + H(+)</text>
        <dbReference type="Rhea" id="RHEA:56712"/>
        <dbReference type="Rhea" id="RHEA-COMP:14679"/>
        <dbReference type="Rhea" id="RHEA-COMP:14680"/>
        <dbReference type="ChEBI" id="CHEBI:15378"/>
        <dbReference type="ChEBI" id="CHEBI:29950"/>
        <dbReference type="ChEBI" id="CHEBI:57685"/>
        <dbReference type="ChEBI" id="CHEBI:64716"/>
        <dbReference type="ChEBI" id="CHEBI:140658"/>
        <dbReference type="EC" id="2.5.1.145"/>
    </reaction>
</comment>
<comment type="pathway">
    <text evidence="1">Protein modification; lipoprotein biosynthesis (diacylglyceryl transfer).</text>
</comment>
<comment type="subcellular location">
    <subcellularLocation>
        <location evidence="1">Cell inner membrane</location>
        <topology evidence="1">Multi-pass membrane protein</topology>
    </subcellularLocation>
</comment>
<comment type="similarity">
    <text evidence="1">Belongs to the Lgt family.</text>
</comment>
<reference key="1">
    <citation type="journal article" date="2007" name="J. Bacteriol.">
        <title>The complete genome sequence of Roseobacter denitrificans reveals a mixotrophic rather than photosynthetic metabolism.</title>
        <authorList>
            <person name="Swingley W.D."/>
            <person name="Sadekar S."/>
            <person name="Mastrian S.D."/>
            <person name="Matthies H.J."/>
            <person name="Hao J."/>
            <person name="Ramos H."/>
            <person name="Acharya C.R."/>
            <person name="Conrad A.L."/>
            <person name="Taylor H.L."/>
            <person name="Dejesa L.C."/>
            <person name="Shah M.K."/>
            <person name="O'Huallachain M.E."/>
            <person name="Lince M.T."/>
            <person name="Blankenship R.E."/>
            <person name="Beatty J.T."/>
            <person name="Touchman J.W."/>
        </authorList>
    </citation>
    <scope>NUCLEOTIDE SEQUENCE [LARGE SCALE GENOMIC DNA]</scope>
    <source>
        <strain>ATCC 33942 / OCh 114</strain>
    </source>
</reference>
<accession>Q162V9</accession>
<keyword id="KW-0997">Cell inner membrane</keyword>
<keyword id="KW-1003">Cell membrane</keyword>
<keyword id="KW-0472">Membrane</keyword>
<keyword id="KW-1185">Reference proteome</keyword>
<keyword id="KW-0808">Transferase</keyword>
<keyword id="KW-0812">Transmembrane</keyword>
<keyword id="KW-1133">Transmembrane helix</keyword>
<protein>
    <recommendedName>
        <fullName evidence="1">Phosphatidylglycerol--prolipoprotein diacylglyceryl transferase</fullName>
        <ecNumber evidence="1">2.5.1.145</ecNumber>
    </recommendedName>
</protein>
<name>LGT_ROSDO</name>
<evidence type="ECO:0000255" key="1">
    <source>
        <dbReference type="HAMAP-Rule" id="MF_01147"/>
    </source>
</evidence>
<proteinExistence type="inferred from homology"/>
<organism>
    <name type="scientific">Roseobacter denitrificans (strain ATCC 33942 / OCh 114)</name>
    <name type="common">Erythrobacter sp. (strain OCh 114)</name>
    <name type="synonym">Roseobacter denitrificans</name>
    <dbReference type="NCBI Taxonomy" id="375451"/>
    <lineage>
        <taxon>Bacteria</taxon>
        <taxon>Pseudomonadati</taxon>
        <taxon>Pseudomonadota</taxon>
        <taxon>Alphaproteobacteria</taxon>
        <taxon>Rhodobacterales</taxon>
        <taxon>Roseobacteraceae</taxon>
        <taxon>Roseobacter</taxon>
    </lineage>
</organism>
<sequence>MRATIPFPDMSPEIFSISVFGFDLALRWYALAYIVGIVLGWRLVLRAVKRPDLWRDDQPVMTAAQIEDLLTWVIVGVILGGRLGYVFFYQPGYYLQNPSEILAVWQGGMAFHGGLLGVIAAGFIYTWRHRIARLSAADIMALGVPPGLLLGRIANFINAELWGRATDMPWGVAFPGAAAQDCAGVEGICARHPSQLYEAGLEGLILGALLIWLVWKKAALKTPGYVAGVFFAGYGVSRFFVEFFRQPDAQFITDGNPLGLAWHINGWGLTMGQCLSLPMILLGIWLIARARHAA</sequence>